<reference key="1">
    <citation type="journal article" date="2001" name="Nature">
        <title>Homologues of Twisted gastrulation are extracellular cofactors in antagonism of BMP signalling.</title>
        <authorList>
            <person name="Scott I.C."/>
            <person name="Blitz I.L."/>
            <person name="Pappano W.N."/>
            <person name="Maas S.A."/>
            <person name="Cho K.W.Y."/>
            <person name="Greenspan D.S."/>
        </authorList>
    </citation>
    <scope>NUCLEOTIDE SEQUENCE [MRNA] (ISOFORM 1)</scope>
    <source>
        <tissue>Aorta</tissue>
    </source>
</reference>
<reference key="2">
    <citation type="journal article" date="2001" name="Nature">
        <authorList>
            <person name="Scott I.C."/>
            <person name="Blitz I.L."/>
            <person name="Pappano W.N."/>
            <person name="Maas S.A."/>
            <person name="Cho K.W.Y."/>
            <person name="Greenspan D.S."/>
        </authorList>
    </citation>
    <scope>ERRATUM OF PUBMED:11260715</scope>
</reference>
<reference key="3">
    <citation type="journal article" date="2001" name="Mamm. Genome">
        <title>Evolutionary conservation, developmental expression, and genomic mapping of mammalian Twisted gastrulation.</title>
        <authorList>
            <person name="Graf D."/>
            <person name="Timmons P.M."/>
            <person name="Hitchins M."/>
            <person name="Episkopou V."/>
            <person name="Moore G."/>
            <person name="Ito T."/>
            <person name="Fujiyama A."/>
            <person name="Fisher A.G."/>
            <person name="Merkenschlager M."/>
        </authorList>
    </citation>
    <scope>NUCLEOTIDE SEQUENCE [MRNA] (ISOFORM 1)</scope>
    <scope>DEVELOPMENTAL STAGE</scope>
</reference>
<reference key="4">
    <citation type="submission" date="2000-08" db="EMBL/GenBank/DDBJ databases">
        <title>Human Twisted gastrulation protein: a new signal pathway for spermatogenesis.</title>
        <authorList>
            <person name="Li J.M."/>
            <person name="Sha J.H."/>
            <person name="Zhou Z.M."/>
        </authorList>
    </citation>
    <scope>NUCLEOTIDE SEQUENCE [MRNA] (ISOFORM 1)</scope>
    <source>
        <tissue>Testis</tissue>
    </source>
</reference>
<reference key="5">
    <citation type="journal article" date="2004" name="Nat. Genet.">
        <title>Complete sequencing and characterization of 21,243 full-length human cDNAs.</title>
        <authorList>
            <person name="Ota T."/>
            <person name="Suzuki Y."/>
            <person name="Nishikawa T."/>
            <person name="Otsuki T."/>
            <person name="Sugiyama T."/>
            <person name="Irie R."/>
            <person name="Wakamatsu A."/>
            <person name="Hayashi K."/>
            <person name="Sato H."/>
            <person name="Nagai K."/>
            <person name="Kimura K."/>
            <person name="Makita H."/>
            <person name="Sekine M."/>
            <person name="Obayashi M."/>
            <person name="Nishi T."/>
            <person name="Shibahara T."/>
            <person name="Tanaka T."/>
            <person name="Ishii S."/>
            <person name="Yamamoto J."/>
            <person name="Saito K."/>
            <person name="Kawai Y."/>
            <person name="Isono Y."/>
            <person name="Nakamura Y."/>
            <person name="Nagahari K."/>
            <person name="Murakami K."/>
            <person name="Yasuda T."/>
            <person name="Iwayanagi T."/>
            <person name="Wagatsuma M."/>
            <person name="Shiratori A."/>
            <person name="Sudo H."/>
            <person name="Hosoiri T."/>
            <person name="Kaku Y."/>
            <person name="Kodaira H."/>
            <person name="Kondo H."/>
            <person name="Sugawara M."/>
            <person name="Takahashi M."/>
            <person name="Kanda K."/>
            <person name="Yokoi T."/>
            <person name="Furuya T."/>
            <person name="Kikkawa E."/>
            <person name="Omura Y."/>
            <person name="Abe K."/>
            <person name="Kamihara K."/>
            <person name="Katsuta N."/>
            <person name="Sato K."/>
            <person name="Tanikawa M."/>
            <person name="Yamazaki M."/>
            <person name="Ninomiya K."/>
            <person name="Ishibashi T."/>
            <person name="Yamashita H."/>
            <person name="Murakawa K."/>
            <person name="Fujimori K."/>
            <person name="Tanai H."/>
            <person name="Kimata M."/>
            <person name="Watanabe M."/>
            <person name="Hiraoka S."/>
            <person name="Chiba Y."/>
            <person name="Ishida S."/>
            <person name="Ono Y."/>
            <person name="Takiguchi S."/>
            <person name="Watanabe S."/>
            <person name="Yosida M."/>
            <person name="Hotuta T."/>
            <person name="Kusano J."/>
            <person name="Kanehori K."/>
            <person name="Takahashi-Fujii A."/>
            <person name="Hara H."/>
            <person name="Tanase T.-O."/>
            <person name="Nomura Y."/>
            <person name="Togiya S."/>
            <person name="Komai F."/>
            <person name="Hara R."/>
            <person name="Takeuchi K."/>
            <person name="Arita M."/>
            <person name="Imose N."/>
            <person name="Musashino K."/>
            <person name="Yuuki H."/>
            <person name="Oshima A."/>
            <person name="Sasaki N."/>
            <person name="Aotsuka S."/>
            <person name="Yoshikawa Y."/>
            <person name="Matsunawa H."/>
            <person name="Ichihara T."/>
            <person name="Shiohata N."/>
            <person name="Sano S."/>
            <person name="Moriya S."/>
            <person name="Momiyama H."/>
            <person name="Satoh N."/>
            <person name="Takami S."/>
            <person name="Terashima Y."/>
            <person name="Suzuki O."/>
            <person name="Nakagawa S."/>
            <person name="Senoh A."/>
            <person name="Mizoguchi H."/>
            <person name="Goto Y."/>
            <person name="Shimizu F."/>
            <person name="Wakebe H."/>
            <person name="Hishigaki H."/>
            <person name="Watanabe T."/>
            <person name="Sugiyama A."/>
            <person name="Takemoto M."/>
            <person name="Kawakami B."/>
            <person name="Yamazaki M."/>
            <person name="Watanabe K."/>
            <person name="Kumagai A."/>
            <person name="Itakura S."/>
            <person name="Fukuzumi Y."/>
            <person name="Fujimori Y."/>
            <person name="Komiyama M."/>
            <person name="Tashiro H."/>
            <person name="Tanigami A."/>
            <person name="Fujiwara T."/>
            <person name="Ono T."/>
            <person name="Yamada K."/>
            <person name="Fujii Y."/>
            <person name="Ozaki K."/>
            <person name="Hirao M."/>
            <person name="Ohmori Y."/>
            <person name="Kawabata A."/>
            <person name="Hikiji T."/>
            <person name="Kobatake N."/>
            <person name="Inagaki H."/>
            <person name="Ikema Y."/>
            <person name="Okamoto S."/>
            <person name="Okitani R."/>
            <person name="Kawakami T."/>
            <person name="Noguchi S."/>
            <person name="Itoh T."/>
            <person name="Shigeta K."/>
            <person name="Senba T."/>
            <person name="Matsumura K."/>
            <person name="Nakajima Y."/>
            <person name="Mizuno T."/>
            <person name="Morinaga M."/>
            <person name="Sasaki M."/>
            <person name="Togashi T."/>
            <person name="Oyama M."/>
            <person name="Hata H."/>
            <person name="Watanabe M."/>
            <person name="Komatsu T."/>
            <person name="Mizushima-Sugano J."/>
            <person name="Satoh T."/>
            <person name="Shirai Y."/>
            <person name="Takahashi Y."/>
            <person name="Nakagawa K."/>
            <person name="Okumura K."/>
            <person name="Nagase T."/>
            <person name="Nomura N."/>
            <person name="Kikuchi H."/>
            <person name="Masuho Y."/>
            <person name="Yamashita R."/>
            <person name="Nakai K."/>
            <person name="Yada T."/>
            <person name="Nakamura Y."/>
            <person name="Ohara O."/>
            <person name="Isogai T."/>
            <person name="Sugano S."/>
        </authorList>
    </citation>
    <scope>NUCLEOTIDE SEQUENCE [LARGE SCALE MRNA] (ISOFORMS 1 AND 2)</scope>
    <source>
        <tissue>Teratocarcinoma</tissue>
        <tissue>Uterus</tissue>
    </source>
</reference>
<reference key="6">
    <citation type="journal article" date="2005" name="DNA Res.">
        <title>Signal sequence and keyword trap in silico for selection of full-length human cDNAs encoding secretion or membrane proteins from oligo-capped cDNA libraries.</title>
        <authorList>
            <person name="Otsuki T."/>
            <person name="Ota T."/>
            <person name="Nishikawa T."/>
            <person name="Hayashi K."/>
            <person name="Suzuki Y."/>
            <person name="Yamamoto J."/>
            <person name="Wakamatsu A."/>
            <person name="Kimura K."/>
            <person name="Sakamoto K."/>
            <person name="Hatano N."/>
            <person name="Kawai Y."/>
            <person name="Ishii S."/>
            <person name="Saito K."/>
            <person name="Kojima S."/>
            <person name="Sugiyama T."/>
            <person name="Ono T."/>
            <person name="Okano K."/>
            <person name="Yoshikawa Y."/>
            <person name="Aotsuka S."/>
            <person name="Sasaki N."/>
            <person name="Hattori A."/>
            <person name="Okumura K."/>
            <person name="Nagai K."/>
            <person name="Sugano S."/>
            <person name="Isogai T."/>
        </authorList>
    </citation>
    <scope>NUCLEOTIDE SEQUENCE [LARGE SCALE MRNA] (ISOFORM 1)</scope>
    <source>
        <tissue>Teratocarcinoma</tissue>
    </source>
</reference>
<reference key="7">
    <citation type="journal article" date="2005" name="Nature">
        <title>DNA sequence and analysis of human chromosome 18.</title>
        <authorList>
            <person name="Nusbaum C."/>
            <person name="Zody M.C."/>
            <person name="Borowsky M.L."/>
            <person name="Kamal M."/>
            <person name="Kodira C.D."/>
            <person name="Taylor T.D."/>
            <person name="Whittaker C.A."/>
            <person name="Chang J.L."/>
            <person name="Cuomo C.A."/>
            <person name="Dewar K."/>
            <person name="FitzGerald M.G."/>
            <person name="Yang X."/>
            <person name="Abouelleil A."/>
            <person name="Allen N.R."/>
            <person name="Anderson S."/>
            <person name="Bloom T."/>
            <person name="Bugalter B."/>
            <person name="Butler J."/>
            <person name="Cook A."/>
            <person name="DeCaprio D."/>
            <person name="Engels R."/>
            <person name="Garber M."/>
            <person name="Gnirke A."/>
            <person name="Hafez N."/>
            <person name="Hall J.L."/>
            <person name="Norman C.H."/>
            <person name="Itoh T."/>
            <person name="Jaffe D.B."/>
            <person name="Kuroki Y."/>
            <person name="Lehoczky J."/>
            <person name="Lui A."/>
            <person name="Macdonald P."/>
            <person name="Mauceli E."/>
            <person name="Mikkelsen T.S."/>
            <person name="Naylor J.W."/>
            <person name="Nicol R."/>
            <person name="Nguyen C."/>
            <person name="Noguchi H."/>
            <person name="O'Leary S.B."/>
            <person name="Piqani B."/>
            <person name="Smith C.L."/>
            <person name="Talamas J.A."/>
            <person name="Topham K."/>
            <person name="Totoki Y."/>
            <person name="Toyoda A."/>
            <person name="Wain H.M."/>
            <person name="Young S.K."/>
            <person name="Zeng Q."/>
            <person name="Zimmer A.R."/>
            <person name="Fujiyama A."/>
            <person name="Hattori M."/>
            <person name="Birren B.W."/>
            <person name="Sakaki Y."/>
            <person name="Lander E.S."/>
        </authorList>
    </citation>
    <scope>NUCLEOTIDE SEQUENCE [LARGE SCALE GENOMIC DNA]</scope>
</reference>
<reference key="8">
    <citation type="submission" date="2005-09" db="EMBL/GenBank/DDBJ databases">
        <authorList>
            <person name="Mural R.J."/>
            <person name="Istrail S."/>
            <person name="Sutton G.G."/>
            <person name="Florea L."/>
            <person name="Halpern A.L."/>
            <person name="Mobarry C.M."/>
            <person name="Lippert R."/>
            <person name="Walenz B."/>
            <person name="Shatkay H."/>
            <person name="Dew I."/>
            <person name="Miller J.R."/>
            <person name="Flanigan M.J."/>
            <person name="Edwards N.J."/>
            <person name="Bolanos R."/>
            <person name="Fasulo D."/>
            <person name="Halldorsson B.V."/>
            <person name="Hannenhalli S."/>
            <person name="Turner R."/>
            <person name="Yooseph S."/>
            <person name="Lu F."/>
            <person name="Nusskern D.R."/>
            <person name="Shue B.C."/>
            <person name="Zheng X.H."/>
            <person name="Zhong F."/>
            <person name="Delcher A.L."/>
            <person name="Huson D.H."/>
            <person name="Kravitz S.A."/>
            <person name="Mouchard L."/>
            <person name="Reinert K."/>
            <person name="Remington K.A."/>
            <person name="Clark A.G."/>
            <person name="Waterman M.S."/>
            <person name="Eichler E.E."/>
            <person name="Adams M.D."/>
            <person name="Hunkapiller M.W."/>
            <person name="Myers E.W."/>
            <person name="Venter J.C."/>
        </authorList>
    </citation>
    <scope>NUCLEOTIDE SEQUENCE [LARGE SCALE GENOMIC DNA]</scope>
</reference>
<reference key="9">
    <citation type="journal article" date="2004" name="Genome Res.">
        <title>The status, quality, and expansion of the NIH full-length cDNA project: the Mammalian Gene Collection (MGC).</title>
        <authorList>
            <consortium name="The MGC Project Team"/>
        </authorList>
    </citation>
    <scope>NUCLEOTIDE SEQUENCE [LARGE SCALE MRNA] (ISOFORM 1)</scope>
    <source>
        <tissue>Lung</tissue>
    </source>
</reference>
<feature type="signal peptide" evidence="2">
    <location>
        <begin position="1"/>
        <end position="25"/>
    </location>
</feature>
<feature type="chain" id="PRO_0000278808" description="Twisted gastrulation protein homolog 1">
    <location>
        <begin position="26"/>
        <end position="223"/>
    </location>
</feature>
<feature type="glycosylation site" description="N-linked (GlcNAc...) asparagine" evidence="2">
    <location>
        <position position="52"/>
    </location>
</feature>
<feature type="glycosylation site" description="N-linked (GlcNAc...) asparagine" evidence="2">
    <location>
        <position position="81"/>
    </location>
</feature>
<feature type="splice variant" id="VSP_042538" description="In isoform 2." evidence="4">
    <original>G</original>
    <variation>D</variation>
    <location>
        <position position="75"/>
    </location>
</feature>
<feature type="splice variant" id="VSP_042539" description="In isoform 2." evidence="4">
    <location>
        <begin position="76"/>
        <end position="223"/>
    </location>
</feature>
<feature type="sequence conflict" description="In Ref. 6; BAC11693." evidence="5" ref="6">
    <original>V</original>
    <variation>E</variation>
    <location>
        <position position="35"/>
    </location>
</feature>
<feature type="helix" evidence="7">
    <location>
        <begin position="28"/>
        <end position="40"/>
    </location>
</feature>
<feature type="strand" evidence="6">
    <location>
        <begin position="48"/>
        <end position="51"/>
    </location>
</feature>
<feature type="helix" evidence="7">
    <location>
        <begin position="56"/>
        <end position="63"/>
    </location>
</feature>
<feature type="helix" evidence="7">
    <location>
        <begin position="64"/>
        <end position="66"/>
    </location>
</feature>
<feature type="helix" evidence="7">
    <location>
        <begin position="67"/>
        <end position="70"/>
    </location>
</feature>
<feature type="helix" evidence="7">
    <location>
        <begin position="71"/>
        <end position="74"/>
    </location>
</feature>
<feature type="helix" evidence="6">
    <location>
        <begin position="87"/>
        <end position="89"/>
    </location>
</feature>
<feature type="strand" evidence="6">
    <location>
        <begin position="91"/>
        <end position="95"/>
    </location>
</feature>
<feature type="helix" evidence="6">
    <location>
        <begin position="101"/>
        <end position="109"/>
    </location>
</feature>
<feature type="strand" evidence="6">
    <location>
        <begin position="116"/>
        <end position="122"/>
    </location>
</feature>
<feature type="strand" evidence="6">
    <location>
        <begin position="166"/>
        <end position="174"/>
    </location>
</feature>
<feature type="helix" evidence="6">
    <location>
        <begin position="178"/>
        <end position="187"/>
    </location>
</feature>
<feature type="strand" evidence="6">
    <location>
        <begin position="191"/>
        <end position="196"/>
    </location>
</feature>
<feature type="strand" evidence="6">
    <location>
        <begin position="201"/>
        <end position="204"/>
    </location>
</feature>
<feature type="strand" evidence="6">
    <location>
        <begin position="209"/>
        <end position="211"/>
    </location>
</feature>
<sequence length="223" mass="25017">MKLHYVAVLTLAILMFLTWLPESLSCNKALCASDVSKCLIQELCQCRPGEGNCSCCKECMLCLGALWDECCDCVGMCNPRNYSDTPPTSKSTVEELHEPIPSLFRALTEGDTQLNWNIVSFPVAEELSHHENLVSFLETVNQPHHQNVSVPSNNVHAPYSSDKEHMCTVVYFDDCMSIHQCKISCESMGASKYRWFHNACCECIGPECIDYGSKTVKCMNCMF</sequence>
<proteinExistence type="evidence at protein level"/>
<accession>Q9GZX9</accession>
<accession>B2RE08</accession>
<accession>D3DUH9</accession>
<accession>Q8NBI7</accession>
<accession>Q96K46</accession>
<organism>
    <name type="scientific">Homo sapiens</name>
    <name type="common">Human</name>
    <dbReference type="NCBI Taxonomy" id="9606"/>
    <lineage>
        <taxon>Eukaryota</taxon>
        <taxon>Metazoa</taxon>
        <taxon>Chordata</taxon>
        <taxon>Craniata</taxon>
        <taxon>Vertebrata</taxon>
        <taxon>Euteleostomi</taxon>
        <taxon>Mammalia</taxon>
        <taxon>Eutheria</taxon>
        <taxon>Euarchontoglires</taxon>
        <taxon>Primates</taxon>
        <taxon>Haplorrhini</taxon>
        <taxon>Catarrhini</taxon>
        <taxon>Hominidae</taxon>
        <taxon>Homo</taxon>
    </lineage>
</organism>
<dbReference type="EMBL" id="AF196834">
    <property type="protein sequence ID" value="AAG43468.1"/>
    <property type="molecule type" value="mRNA"/>
</dbReference>
<dbReference type="EMBL" id="AJ297391">
    <property type="protein sequence ID" value="CAC05581.1"/>
    <property type="molecule type" value="mRNA"/>
</dbReference>
<dbReference type="EMBL" id="AF294628">
    <property type="protein sequence ID" value="AAG10076.1"/>
    <property type="molecule type" value="mRNA"/>
</dbReference>
<dbReference type="EMBL" id="AK027629">
    <property type="protein sequence ID" value="BAB55246.1"/>
    <property type="status" value="ALT_SEQ"/>
    <property type="molecule type" value="mRNA"/>
</dbReference>
<dbReference type="EMBL" id="AK075550">
    <property type="protein sequence ID" value="BAC11693.1"/>
    <property type="molecule type" value="mRNA"/>
</dbReference>
<dbReference type="EMBL" id="AK315751">
    <property type="protein sequence ID" value="BAG38105.1"/>
    <property type="molecule type" value="mRNA"/>
</dbReference>
<dbReference type="EMBL" id="AP001033">
    <property type="status" value="NOT_ANNOTATED_CDS"/>
    <property type="molecule type" value="Genomic_DNA"/>
</dbReference>
<dbReference type="EMBL" id="CH471113">
    <property type="protein sequence ID" value="EAX01606.1"/>
    <property type="molecule type" value="Genomic_DNA"/>
</dbReference>
<dbReference type="EMBL" id="CH471113">
    <property type="protein sequence ID" value="EAX01607.1"/>
    <property type="molecule type" value="Genomic_DNA"/>
</dbReference>
<dbReference type="EMBL" id="BC020490">
    <property type="protein sequence ID" value="AAH20490.1"/>
    <property type="molecule type" value="mRNA"/>
</dbReference>
<dbReference type="CCDS" id="CCDS11844.1">
    <molecule id="Q9GZX9-1"/>
</dbReference>
<dbReference type="RefSeq" id="NP_065699.1">
    <molecule id="Q9GZX9-1"/>
    <property type="nucleotide sequence ID" value="NM_020648.6"/>
</dbReference>
<dbReference type="PDB" id="8BWA">
    <property type="method" value="X-ray"/>
    <property type="resolution" value="3.61 A"/>
    <property type="chains" value="A/B=26-223"/>
</dbReference>
<dbReference type="PDB" id="8BWD">
    <property type="method" value="X-ray"/>
    <property type="resolution" value="2.63 A"/>
    <property type="chains" value="A/B=26-223"/>
</dbReference>
<dbReference type="PDB" id="8BWI">
    <property type="method" value="X-ray"/>
    <property type="resolution" value="3.40 A"/>
    <property type="chains" value="A=26-223"/>
</dbReference>
<dbReference type="PDB" id="8BWL">
    <property type="method" value="X-ray"/>
    <property type="resolution" value="1.96 A"/>
    <property type="chains" value="C/D=26-83"/>
</dbReference>
<dbReference type="PDB" id="8BWM">
    <property type="method" value="X-ray"/>
    <property type="resolution" value="2.50 A"/>
    <property type="chains" value="C/D=26-83"/>
</dbReference>
<dbReference type="PDB" id="8BWN">
    <property type="method" value="X-ray"/>
    <property type="resolution" value="2.57 A"/>
    <property type="chains" value="C/D=26-83"/>
</dbReference>
<dbReference type="PDBsum" id="8BWA"/>
<dbReference type="PDBsum" id="8BWD"/>
<dbReference type="PDBsum" id="8BWI"/>
<dbReference type="PDBsum" id="8BWL"/>
<dbReference type="PDBsum" id="8BWM"/>
<dbReference type="PDBsum" id="8BWN"/>
<dbReference type="SMR" id="Q9GZX9"/>
<dbReference type="BioGRID" id="121338">
    <property type="interactions" value="16"/>
</dbReference>
<dbReference type="CORUM" id="Q9GZX9"/>
<dbReference type="FunCoup" id="Q9GZX9">
    <property type="interactions" value="349"/>
</dbReference>
<dbReference type="IntAct" id="Q9GZX9">
    <property type="interactions" value="11"/>
</dbReference>
<dbReference type="STRING" id="9606.ENSP00000262120"/>
<dbReference type="GlyConnect" id="1867">
    <property type="glycosylation" value="4 N-Linked glycans (1 site)"/>
</dbReference>
<dbReference type="GlyCosmos" id="Q9GZX9">
    <property type="glycosylation" value="2 sites, 4 glycans"/>
</dbReference>
<dbReference type="GlyGen" id="Q9GZX9">
    <property type="glycosylation" value="3 sites, 12 N-linked glycans (2 sites), 1 O-linked glycan (1 site)"/>
</dbReference>
<dbReference type="iPTMnet" id="Q9GZX9"/>
<dbReference type="PhosphoSitePlus" id="Q9GZX9"/>
<dbReference type="BioMuta" id="TWSG1"/>
<dbReference type="DMDM" id="74733506"/>
<dbReference type="CPTAC" id="CPTAC-1513"/>
<dbReference type="jPOST" id="Q9GZX9"/>
<dbReference type="MassIVE" id="Q9GZX9"/>
<dbReference type="PaxDb" id="9606-ENSP00000262120"/>
<dbReference type="PeptideAtlas" id="Q9GZX9"/>
<dbReference type="ProteomicsDB" id="80169">
    <molecule id="Q9GZX9-1"/>
</dbReference>
<dbReference type="ProteomicsDB" id="80170">
    <molecule id="Q9GZX9-2"/>
</dbReference>
<dbReference type="Pumba" id="Q9GZX9"/>
<dbReference type="Antibodypedia" id="2970">
    <property type="antibodies" value="116 antibodies from 23 providers"/>
</dbReference>
<dbReference type="DNASU" id="57045"/>
<dbReference type="Ensembl" id="ENST00000262120.10">
    <molecule id="Q9GZX9-1"/>
    <property type="protein sequence ID" value="ENSP00000262120.5"/>
    <property type="gene ID" value="ENSG00000128791.12"/>
</dbReference>
<dbReference type="Ensembl" id="ENST00000583147.5">
    <molecule id="Q9GZX9-2"/>
    <property type="protein sequence ID" value="ENSP00000463331.1"/>
    <property type="gene ID" value="ENSG00000128791.12"/>
</dbReference>
<dbReference type="GeneID" id="57045"/>
<dbReference type="KEGG" id="hsa:57045"/>
<dbReference type="MANE-Select" id="ENST00000262120.10">
    <property type="protein sequence ID" value="ENSP00000262120.5"/>
    <property type="RefSeq nucleotide sequence ID" value="NM_020648.6"/>
    <property type="RefSeq protein sequence ID" value="NP_065699.1"/>
</dbReference>
<dbReference type="UCSC" id="uc002knz.3">
    <molecule id="Q9GZX9-1"/>
    <property type="organism name" value="human"/>
</dbReference>
<dbReference type="AGR" id="HGNC:12429"/>
<dbReference type="CTD" id="57045"/>
<dbReference type="DisGeNET" id="57045"/>
<dbReference type="GeneCards" id="TWSG1"/>
<dbReference type="HGNC" id="HGNC:12429">
    <property type="gene designation" value="TWSG1"/>
</dbReference>
<dbReference type="HPA" id="ENSG00000128791">
    <property type="expression patterns" value="Low tissue specificity"/>
</dbReference>
<dbReference type="MIM" id="605049">
    <property type="type" value="gene"/>
</dbReference>
<dbReference type="neXtProt" id="NX_Q9GZX9"/>
<dbReference type="OpenTargets" id="ENSG00000128791"/>
<dbReference type="PharmGKB" id="PA37089"/>
<dbReference type="VEuPathDB" id="HostDB:ENSG00000128791"/>
<dbReference type="eggNOG" id="ENOG502QRE9">
    <property type="taxonomic scope" value="Eukaryota"/>
</dbReference>
<dbReference type="GeneTree" id="ENSGT00390000007058"/>
<dbReference type="HOGENOM" id="CLU_2670412_0_0_1"/>
<dbReference type="InParanoid" id="Q9GZX9"/>
<dbReference type="OMA" id="NCTVAFF"/>
<dbReference type="OrthoDB" id="10037323at2759"/>
<dbReference type="PAN-GO" id="Q9GZX9">
    <property type="GO annotations" value="2 GO annotations based on evolutionary models"/>
</dbReference>
<dbReference type="PhylomeDB" id="Q9GZX9"/>
<dbReference type="TreeFam" id="TF323922"/>
<dbReference type="PathwayCommons" id="Q9GZX9"/>
<dbReference type="SignaLink" id="Q9GZX9"/>
<dbReference type="BioGRID-ORCS" id="57045">
    <property type="hits" value="16 hits in 1156 CRISPR screens"/>
</dbReference>
<dbReference type="ChiTaRS" id="TWSG1">
    <property type="organism name" value="human"/>
</dbReference>
<dbReference type="GeneWiki" id="TWSG1"/>
<dbReference type="GenomeRNAi" id="57045"/>
<dbReference type="Pharos" id="Q9GZX9">
    <property type="development level" value="Tbio"/>
</dbReference>
<dbReference type="PRO" id="PR:Q9GZX9"/>
<dbReference type="Proteomes" id="UP000005640">
    <property type="component" value="Chromosome 18"/>
</dbReference>
<dbReference type="RNAct" id="Q9GZX9">
    <property type="molecule type" value="protein"/>
</dbReference>
<dbReference type="Bgee" id="ENSG00000128791">
    <property type="expression patterns" value="Expressed in seminal vesicle and 195 other cell types or tissues"/>
</dbReference>
<dbReference type="ExpressionAtlas" id="Q9GZX9">
    <property type="expression patterns" value="baseline and differential"/>
</dbReference>
<dbReference type="GO" id="GO:0005615">
    <property type="term" value="C:extracellular space"/>
    <property type="evidence" value="ECO:0000318"/>
    <property type="project" value="GO_Central"/>
</dbReference>
<dbReference type="GO" id="GO:0008201">
    <property type="term" value="F:heparin binding"/>
    <property type="evidence" value="ECO:0007669"/>
    <property type="project" value="Ensembl"/>
</dbReference>
<dbReference type="GO" id="GO:0050431">
    <property type="term" value="F:transforming growth factor beta binding"/>
    <property type="evidence" value="ECO:0000314"/>
    <property type="project" value="BHF-UCL"/>
</dbReference>
<dbReference type="GO" id="GO:0030509">
    <property type="term" value="P:BMP signaling pathway"/>
    <property type="evidence" value="ECO:0007669"/>
    <property type="project" value="Ensembl"/>
</dbReference>
<dbReference type="GO" id="GO:0043010">
    <property type="term" value="P:camera-type eye development"/>
    <property type="evidence" value="ECO:0007669"/>
    <property type="project" value="Ensembl"/>
</dbReference>
<dbReference type="GO" id="GO:0002062">
    <property type="term" value="P:chondrocyte differentiation"/>
    <property type="evidence" value="ECO:0007669"/>
    <property type="project" value="Ensembl"/>
</dbReference>
<dbReference type="GO" id="GO:0030900">
    <property type="term" value="P:forebrain development"/>
    <property type="evidence" value="ECO:0007669"/>
    <property type="project" value="Ensembl"/>
</dbReference>
<dbReference type="GO" id="GO:0030097">
    <property type="term" value="P:hemopoiesis"/>
    <property type="evidence" value="ECO:0007669"/>
    <property type="project" value="Ensembl"/>
</dbReference>
<dbReference type="GO" id="GO:0001707">
    <property type="term" value="P:mesoderm formation"/>
    <property type="evidence" value="ECO:0007669"/>
    <property type="project" value="Ensembl"/>
</dbReference>
<dbReference type="GO" id="GO:0030514">
    <property type="term" value="P:negative regulation of BMP signaling pathway"/>
    <property type="evidence" value="ECO:0007669"/>
    <property type="project" value="Ensembl"/>
</dbReference>
<dbReference type="GO" id="GO:2000515">
    <property type="term" value="P:negative regulation of CD4-positive, alpha-beta T cell activation"/>
    <property type="evidence" value="ECO:0000314"/>
    <property type="project" value="BHF-UCL"/>
</dbReference>
<dbReference type="GO" id="GO:2000562">
    <property type="term" value="P:negative regulation of CD4-positive, alpha-beta T cell proliferation"/>
    <property type="evidence" value="ECO:0000314"/>
    <property type="project" value="BHF-UCL"/>
</dbReference>
<dbReference type="GO" id="GO:0001818">
    <property type="term" value="P:negative regulation of cytokine production"/>
    <property type="evidence" value="ECO:0000314"/>
    <property type="project" value="BHF-UCL"/>
</dbReference>
<dbReference type="GO" id="GO:0045668">
    <property type="term" value="P:negative regulation of osteoblast differentiation"/>
    <property type="evidence" value="ECO:0007669"/>
    <property type="project" value="Ensembl"/>
</dbReference>
<dbReference type="GO" id="GO:0001503">
    <property type="term" value="P:ossification"/>
    <property type="evidence" value="ECO:0007669"/>
    <property type="project" value="Ensembl"/>
</dbReference>
<dbReference type="GO" id="GO:0030513">
    <property type="term" value="P:positive regulation of BMP signaling pathway"/>
    <property type="evidence" value="ECO:0007669"/>
    <property type="project" value="Ensembl"/>
</dbReference>
<dbReference type="GO" id="GO:0060391">
    <property type="term" value="P:positive regulation of SMAD protein signal transduction"/>
    <property type="evidence" value="ECO:0000314"/>
    <property type="project" value="BHF-UCL"/>
</dbReference>
<dbReference type="GO" id="GO:0030511">
    <property type="term" value="P:positive regulation of transforming growth factor beta receptor signaling pathway"/>
    <property type="evidence" value="ECO:0000314"/>
    <property type="project" value="BHF-UCL"/>
</dbReference>
<dbReference type="GO" id="GO:0030510">
    <property type="term" value="P:regulation of BMP signaling pathway"/>
    <property type="evidence" value="ECO:0000318"/>
    <property type="project" value="GO_Central"/>
</dbReference>
<dbReference type="GO" id="GO:0007435">
    <property type="term" value="P:salivary gland morphogenesis"/>
    <property type="evidence" value="ECO:0007669"/>
    <property type="project" value="Ensembl"/>
</dbReference>
<dbReference type="InterPro" id="IPR006761">
    <property type="entry name" value="Tsg"/>
</dbReference>
<dbReference type="PANTHER" id="PTHR12312:SF17">
    <property type="entry name" value="TWISTED GASTRULATION PROTEIN HOMOLOG 1"/>
    <property type="match status" value="1"/>
</dbReference>
<dbReference type="PANTHER" id="PTHR12312">
    <property type="entry name" value="TWISTED GASTRULATION PROTEIN HOMOLOG 1-A-RELATED"/>
    <property type="match status" value="1"/>
</dbReference>
<dbReference type="Pfam" id="PF04668">
    <property type="entry name" value="Tsg"/>
    <property type="match status" value="1"/>
</dbReference>
<dbReference type="Pfam" id="PF23782">
    <property type="entry name" value="Tsg_N"/>
    <property type="match status" value="1"/>
</dbReference>
<comment type="function">
    <text evidence="1">May be involved in dorsoventral axis formation. Seems to antagonize BMP signaling by forming ternary complexes with CHRD and BMPs, thereby preventing BMPs from binding to their receptors. In addition to the anti-BMP function, also has pro-BMP activity, partly mediated by cleavage and degradation of CHRD, which releases BMPs from ternary complexes. May be an important modulator of BMP-regulated cartilage development and chondrocyte differentiation. May play a role in thymocyte development (By similarity).</text>
</comment>
<comment type="subunit">
    <text evidence="1">Interacts with CHRD and BMP4. This interaction enhances CHRD/BMP4 complex formation. Interacts with BMP7 (By similarity).</text>
</comment>
<comment type="interaction">
    <interactant intactId="EBI-10304067">
        <id>Q9GZX9</id>
    </interactant>
    <interactant intactId="EBI-18304435">
        <id>Q5JX71</id>
        <label>FAM209A</label>
    </interactant>
    <organismsDiffer>false</organismsDiffer>
    <experiments>3</experiments>
</comment>
<comment type="interaction">
    <interactant intactId="EBI-10304067">
        <id>Q9GZX9</id>
    </interactant>
    <interactant intactId="EBI-12142257">
        <id>Q8TBE3</id>
        <label>FNDC9</label>
    </interactant>
    <organismsDiffer>false</organismsDiffer>
    <experiments>3</experiments>
</comment>
<comment type="interaction">
    <interactant intactId="EBI-10304067">
        <id>Q9GZX9</id>
    </interactant>
    <interactant intactId="EBI-17458373">
        <id>P48165</id>
        <label>GJA8</label>
    </interactant>
    <organismsDiffer>false</organismsDiffer>
    <experiments>3</experiments>
</comment>
<comment type="interaction">
    <interactant intactId="EBI-10304067">
        <id>Q9GZX9</id>
    </interactant>
    <interactant intactId="EBI-13067820">
        <id>Q9NZD1</id>
        <label>GPRC5D</label>
    </interactant>
    <organismsDiffer>false</organismsDiffer>
    <experiments>3</experiments>
</comment>
<comment type="interaction">
    <interactant intactId="EBI-10304067">
        <id>Q9GZX9</id>
    </interactant>
    <interactant intactId="EBI-2432309">
        <id>Q92876</id>
        <label>KLK6</label>
    </interactant>
    <organismsDiffer>false</organismsDiffer>
    <experiments>3</experiments>
</comment>
<comment type="interaction">
    <interactant intactId="EBI-10304067">
        <id>Q9GZX9</id>
    </interactant>
    <interactant intactId="EBI-3925442">
        <id>Q9HCJ2</id>
        <label>LRRC4C</label>
    </interactant>
    <organismsDiffer>false</organismsDiffer>
    <experiments>3</experiments>
</comment>
<comment type="interaction">
    <interactant intactId="EBI-10304067">
        <id>Q9GZX9</id>
    </interactant>
    <interactant intactId="EBI-347996">
        <id>O43765</id>
        <label>SGTA</label>
    </interactant>
    <organismsDiffer>false</organismsDiffer>
    <experiments>3</experiments>
</comment>
<comment type="subcellular location">
    <subcellularLocation>
        <location evidence="1">Secreted</location>
    </subcellularLocation>
</comment>
<comment type="alternative products">
    <event type="alternative splicing"/>
    <isoform>
        <id>Q9GZX9-1</id>
        <name>1</name>
        <sequence type="displayed"/>
    </isoform>
    <isoform>
        <id>Q9GZX9-2</id>
        <name>2</name>
        <sequence type="described" ref="VSP_042538 VSP_042539"/>
    </isoform>
</comment>
<comment type="developmental stage">
    <text evidence="3">Expressed in brain throughout development.</text>
</comment>
<comment type="domain">
    <text evidence="1">The N-terminal domain is sufficient to interact with BMP4.</text>
</comment>
<comment type="miscellaneous">
    <molecule>Isoform 2</molecule>
    <text evidence="5">May be produced at very low levels due to a premature stop codon in the mRNA, leading to nonsense-mediated mRNA decay.</text>
</comment>
<comment type="similarity">
    <text evidence="5">Belongs to the twisted gastrulation protein family.</text>
</comment>
<comment type="sequence caution" evidence="5">
    <conflict type="erroneous translation">
        <sequence resource="EMBL-CDS" id="BAB55246"/>
    </conflict>
    <text>Wrong choice of CDS.</text>
</comment>
<keyword id="KW-0002">3D-structure</keyword>
<keyword id="KW-0025">Alternative splicing</keyword>
<keyword id="KW-0217">Developmental protein</keyword>
<keyword id="KW-0325">Glycoprotein</keyword>
<keyword id="KW-1267">Proteomics identification</keyword>
<keyword id="KW-1185">Reference proteome</keyword>
<keyword id="KW-0964">Secreted</keyword>
<keyword id="KW-0732">Signal</keyword>
<protein>
    <recommendedName>
        <fullName>Twisted gastrulation protein homolog 1</fullName>
    </recommendedName>
</protein>
<name>TWSG1_HUMAN</name>
<evidence type="ECO:0000250" key="1"/>
<evidence type="ECO:0000255" key="2"/>
<evidence type="ECO:0000269" key="3">
    <source>
    </source>
</evidence>
<evidence type="ECO:0000303" key="4">
    <source>
    </source>
</evidence>
<evidence type="ECO:0000305" key="5"/>
<evidence type="ECO:0007829" key="6">
    <source>
        <dbReference type="PDB" id="8BWD"/>
    </source>
</evidence>
<evidence type="ECO:0007829" key="7">
    <source>
        <dbReference type="PDB" id="8BWL"/>
    </source>
</evidence>
<gene>
    <name type="primary">TWSG1</name>
    <name type="synonym">TSG</name>
    <name type="ORF">PSEC0250</name>
</gene>